<evidence type="ECO:0000255" key="1">
    <source>
        <dbReference type="HAMAP-Rule" id="MF_01450"/>
    </source>
</evidence>
<gene>
    <name type="primary">acyP</name>
    <name type="ordered locus">YpsIP31758_2530</name>
</gene>
<reference key="1">
    <citation type="journal article" date="2007" name="PLoS Genet.">
        <title>The complete genome sequence of Yersinia pseudotuberculosis IP31758, the causative agent of Far East scarlet-like fever.</title>
        <authorList>
            <person name="Eppinger M."/>
            <person name="Rosovitz M.J."/>
            <person name="Fricke W.F."/>
            <person name="Rasko D.A."/>
            <person name="Kokorina G."/>
            <person name="Fayolle C."/>
            <person name="Lindler L.E."/>
            <person name="Carniel E."/>
            <person name="Ravel J."/>
        </authorList>
    </citation>
    <scope>NUCLEOTIDE SEQUENCE [LARGE SCALE GENOMIC DNA]</scope>
    <source>
        <strain>IP 31758</strain>
    </source>
</reference>
<comment type="catalytic activity">
    <reaction evidence="1">
        <text>an acyl phosphate + H2O = a carboxylate + phosphate + H(+)</text>
        <dbReference type="Rhea" id="RHEA:14965"/>
        <dbReference type="ChEBI" id="CHEBI:15377"/>
        <dbReference type="ChEBI" id="CHEBI:15378"/>
        <dbReference type="ChEBI" id="CHEBI:29067"/>
        <dbReference type="ChEBI" id="CHEBI:43474"/>
        <dbReference type="ChEBI" id="CHEBI:59918"/>
        <dbReference type="EC" id="3.6.1.7"/>
    </reaction>
</comment>
<comment type="similarity">
    <text evidence="1">Belongs to the acylphosphatase family.</text>
</comment>
<protein>
    <recommendedName>
        <fullName evidence="1">Acylphosphatase</fullName>
        <ecNumber evidence="1">3.6.1.7</ecNumber>
    </recommendedName>
    <alternativeName>
        <fullName evidence="1">Acylphosphate phosphohydrolase</fullName>
    </alternativeName>
</protein>
<dbReference type="EC" id="3.6.1.7" evidence="1"/>
<dbReference type="EMBL" id="CP000720">
    <property type="protein sequence ID" value="ABS49061.1"/>
    <property type="molecule type" value="Genomic_DNA"/>
</dbReference>
<dbReference type="SMR" id="A7FJR7"/>
<dbReference type="KEGG" id="ypi:YpsIP31758_2530"/>
<dbReference type="HOGENOM" id="CLU_141932_1_2_6"/>
<dbReference type="Proteomes" id="UP000002412">
    <property type="component" value="Chromosome"/>
</dbReference>
<dbReference type="GO" id="GO:0003998">
    <property type="term" value="F:acylphosphatase activity"/>
    <property type="evidence" value="ECO:0007669"/>
    <property type="project" value="UniProtKB-UniRule"/>
</dbReference>
<dbReference type="Gene3D" id="3.30.70.100">
    <property type="match status" value="1"/>
</dbReference>
<dbReference type="HAMAP" id="MF_01450">
    <property type="entry name" value="Acylphosphatase_entero"/>
    <property type="match status" value="1"/>
</dbReference>
<dbReference type="InterPro" id="IPR020456">
    <property type="entry name" value="Acylphosphatase"/>
</dbReference>
<dbReference type="InterPro" id="IPR001792">
    <property type="entry name" value="Acylphosphatase-like_dom"/>
</dbReference>
<dbReference type="InterPro" id="IPR036046">
    <property type="entry name" value="Acylphosphatase-like_dom_sf"/>
</dbReference>
<dbReference type="InterPro" id="IPR028627">
    <property type="entry name" value="Acylphosphatase_bac"/>
</dbReference>
<dbReference type="InterPro" id="IPR017968">
    <property type="entry name" value="Acylphosphatase_CS"/>
</dbReference>
<dbReference type="NCBIfam" id="NF011000">
    <property type="entry name" value="PRK14426.1"/>
    <property type="match status" value="1"/>
</dbReference>
<dbReference type="PANTHER" id="PTHR47268">
    <property type="entry name" value="ACYLPHOSPHATASE"/>
    <property type="match status" value="1"/>
</dbReference>
<dbReference type="PANTHER" id="PTHR47268:SF4">
    <property type="entry name" value="ACYLPHOSPHATASE"/>
    <property type="match status" value="1"/>
</dbReference>
<dbReference type="Pfam" id="PF00708">
    <property type="entry name" value="Acylphosphatase"/>
    <property type="match status" value="1"/>
</dbReference>
<dbReference type="PRINTS" id="PR00112">
    <property type="entry name" value="ACYLPHPHTASE"/>
</dbReference>
<dbReference type="SUPFAM" id="SSF54975">
    <property type="entry name" value="Acylphosphatase/BLUF domain-like"/>
    <property type="match status" value="1"/>
</dbReference>
<dbReference type="PROSITE" id="PS00150">
    <property type="entry name" value="ACYLPHOSPHATASE_1"/>
    <property type="match status" value="1"/>
</dbReference>
<dbReference type="PROSITE" id="PS00151">
    <property type="entry name" value="ACYLPHOSPHATASE_2"/>
    <property type="match status" value="1"/>
</dbReference>
<dbReference type="PROSITE" id="PS51160">
    <property type="entry name" value="ACYLPHOSPHATASE_3"/>
    <property type="match status" value="1"/>
</dbReference>
<feature type="chain" id="PRO_0000326854" description="Acylphosphatase">
    <location>
        <begin position="1"/>
        <end position="92"/>
    </location>
</feature>
<feature type="domain" description="Acylphosphatase-like" evidence="1">
    <location>
        <begin position="5"/>
        <end position="92"/>
    </location>
</feature>
<feature type="active site" evidence="1">
    <location>
        <position position="20"/>
    </location>
</feature>
<feature type="active site" evidence="1">
    <location>
        <position position="38"/>
    </location>
</feature>
<name>ACYP_YERP3</name>
<keyword id="KW-0378">Hydrolase</keyword>
<accession>A7FJR7</accession>
<proteinExistence type="inferred from homology"/>
<organism>
    <name type="scientific">Yersinia pseudotuberculosis serotype O:1b (strain IP 31758)</name>
    <dbReference type="NCBI Taxonomy" id="349747"/>
    <lineage>
        <taxon>Bacteria</taxon>
        <taxon>Pseudomonadati</taxon>
        <taxon>Pseudomonadota</taxon>
        <taxon>Gammaproteobacteria</taxon>
        <taxon>Enterobacterales</taxon>
        <taxon>Yersiniaceae</taxon>
        <taxon>Yersinia</taxon>
    </lineage>
</organism>
<sequence>MSKIYIVAYVYGVVQGVGFRYSTQRQAQQLGVTGYAKNCDDGSVEVVASGNPQAVERLMEWIRQGGPRGARVDRLLTEPYPPTPFETFSIRY</sequence>